<name>ABHD_DICDI</name>
<gene>
    <name type="primary">abhd</name>
    <name type="ORF">DDB_G0289723</name>
</gene>
<organism>
    <name type="scientific">Dictyostelium discoideum</name>
    <name type="common">Social amoeba</name>
    <dbReference type="NCBI Taxonomy" id="44689"/>
    <lineage>
        <taxon>Eukaryota</taxon>
        <taxon>Amoebozoa</taxon>
        <taxon>Evosea</taxon>
        <taxon>Eumycetozoa</taxon>
        <taxon>Dictyostelia</taxon>
        <taxon>Dictyosteliales</taxon>
        <taxon>Dictyosteliaceae</taxon>
        <taxon>Dictyostelium</taxon>
    </lineage>
</organism>
<feature type="chain" id="PRO_0000344505" description="Abhydrolase domain-containing protein">
    <location>
        <begin position="1"/>
        <end position="395"/>
    </location>
</feature>
<feature type="domain" description="AB hydrolase-1" evidence="2">
    <location>
        <begin position="117"/>
        <end position="331"/>
    </location>
</feature>
<feature type="active site" description="Charge relay system" evidence="1">
    <location>
        <position position="200"/>
    </location>
</feature>
<feature type="active site" description="Charge relay system" evidence="1">
    <location>
        <position position="327"/>
    </location>
</feature>
<feature type="active site" description="Charge relay system" evidence="1">
    <location>
        <position position="356"/>
    </location>
</feature>
<dbReference type="EC" id="3.1.1.-"/>
<dbReference type="EMBL" id="AAFI02000148">
    <property type="protein sequence ID" value="EAL62573.1"/>
    <property type="molecule type" value="Genomic_DNA"/>
</dbReference>
<dbReference type="RefSeq" id="XP_636080.1">
    <property type="nucleotide sequence ID" value="XM_630988.1"/>
</dbReference>
<dbReference type="FunCoup" id="Q54H38">
    <property type="interactions" value="177"/>
</dbReference>
<dbReference type="STRING" id="44689.Q54H38"/>
<dbReference type="ESTHER" id="dicdi-abhd">
    <property type="family name" value="abh_upf0017"/>
</dbReference>
<dbReference type="GlyGen" id="Q54H38">
    <property type="glycosylation" value="1 site"/>
</dbReference>
<dbReference type="PaxDb" id="44689-DDB0237966"/>
<dbReference type="EnsemblProtists" id="EAL62573">
    <property type="protein sequence ID" value="EAL62573"/>
    <property type="gene ID" value="DDB_G0289723"/>
</dbReference>
<dbReference type="GeneID" id="8627292"/>
<dbReference type="KEGG" id="ddi:DDB_G0289723"/>
<dbReference type="dictyBase" id="DDB_G0289723">
    <property type="gene designation" value="abhd"/>
</dbReference>
<dbReference type="VEuPathDB" id="AmoebaDB:DDB_G0289723"/>
<dbReference type="eggNOG" id="KOG1838">
    <property type="taxonomic scope" value="Eukaryota"/>
</dbReference>
<dbReference type="HOGENOM" id="CLU_032487_1_1_1"/>
<dbReference type="InParanoid" id="Q54H38"/>
<dbReference type="OMA" id="HCTGEDV"/>
<dbReference type="PhylomeDB" id="Q54H38"/>
<dbReference type="Reactome" id="R-DDI-1483191">
    <property type="pathway name" value="Synthesis of PC"/>
</dbReference>
<dbReference type="PRO" id="PR:Q54H38"/>
<dbReference type="Proteomes" id="UP000002195">
    <property type="component" value="Chromosome 5"/>
</dbReference>
<dbReference type="GO" id="GO:0045335">
    <property type="term" value="C:phagocytic vesicle"/>
    <property type="evidence" value="ECO:0007005"/>
    <property type="project" value="dictyBase"/>
</dbReference>
<dbReference type="GO" id="GO:0008126">
    <property type="term" value="F:acetylesterase activity"/>
    <property type="evidence" value="ECO:0000318"/>
    <property type="project" value="GO_Central"/>
</dbReference>
<dbReference type="GO" id="GO:0047372">
    <property type="term" value="F:monoacylglycerol lipase activity"/>
    <property type="evidence" value="ECO:0000318"/>
    <property type="project" value="GO_Central"/>
</dbReference>
<dbReference type="GO" id="GO:0051792">
    <property type="term" value="P:medium-chain fatty acid biosynthetic process"/>
    <property type="evidence" value="ECO:0000318"/>
    <property type="project" value="GO_Central"/>
</dbReference>
<dbReference type="GO" id="GO:0051793">
    <property type="term" value="P:medium-chain fatty acid catabolic process"/>
    <property type="evidence" value="ECO:0000318"/>
    <property type="project" value="GO_Central"/>
</dbReference>
<dbReference type="FunFam" id="3.40.50.1820:FF:000483">
    <property type="entry name" value="Clan SC, family S33, methylesterase-like serine peptidase"/>
    <property type="match status" value="1"/>
</dbReference>
<dbReference type="Gene3D" id="3.40.50.1820">
    <property type="entry name" value="alpha/beta hydrolase"/>
    <property type="match status" value="1"/>
</dbReference>
<dbReference type="InterPro" id="IPR000073">
    <property type="entry name" value="AB_hydrolase_1"/>
</dbReference>
<dbReference type="InterPro" id="IPR050960">
    <property type="entry name" value="AB_hydrolase_4_sf"/>
</dbReference>
<dbReference type="InterPro" id="IPR029058">
    <property type="entry name" value="AB_hydrolase_fold"/>
</dbReference>
<dbReference type="InterPro" id="IPR012020">
    <property type="entry name" value="ABHD4"/>
</dbReference>
<dbReference type="PANTHER" id="PTHR10794">
    <property type="entry name" value="ABHYDROLASE DOMAIN-CONTAINING PROTEIN"/>
    <property type="match status" value="1"/>
</dbReference>
<dbReference type="PANTHER" id="PTHR10794:SF63">
    <property type="entry name" value="ALPHA_BETA HYDROLASE 1, ISOFORM A"/>
    <property type="match status" value="1"/>
</dbReference>
<dbReference type="Pfam" id="PF00561">
    <property type="entry name" value="Abhydrolase_1"/>
    <property type="match status" value="1"/>
</dbReference>
<dbReference type="PIRSF" id="PIRSF005211">
    <property type="entry name" value="Ab_hydro_YheT"/>
    <property type="match status" value="1"/>
</dbReference>
<dbReference type="SUPFAM" id="SSF53474">
    <property type="entry name" value="alpha/beta-Hydrolases"/>
    <property type="match status" value="1"/>
</dbReference>
<comment type="similarity">
    <text evidence="3">Belongs to the AB hydrolase superfamily. AB hydrolase 4 family.</text>
</comment>
<accession>Q54H38</accession>
<reference key="1">
    <citation type="journal article" date="2005" name="Nature">
        <title>The genome of the social amoeba Dictyostelium discoideum.</title>
        <authorList>
            <person name="Eichinger L."/>
            <person name="Pachebat J.A."/>
            <person name="Gloeckner G."/>
            <person name="Rajandream M.A."/>
            <person name="Sucgang R."/>
            <person name="Berriman M."/>
            <person name="Song J."/>
            <person name="Olsen R."/>
            <person name="Szafranski K."/>
            <person name="Xu Q."/>
            <person name="Tunggal B."/>
            <person name="Kummerfeld S."/>
            <person name="Madera M."/>
            <person name="Konfortov B.A."/>
            <person name="Rivero F."/>
            <person name="Bankier A.T."/>
            <person name="Lehmann R."/>
            <person name="Hamlin N."/>
            <person name="Davies R."/>
            <person name="Gaudet P."/>
            <person name="Fey P."/>
            <person name="Pilcher K."/>
            <person name="Chen G."/>
            <person name="Saunders D."/>
            <person name="Sodergren E.J."/>
            <person name="Davis P."/>
            <person name="Kerhornou A."/>
            <person name="Nie X."/>
            <person name="Hall N."/>
            <person name="Anjard C."/>
            <person name="Hemphill L."/>
            <person name="Bason N."/>
            <person name="Farbrother P."/>
            <person name="Desany B."/>
            <person name="Just E."/>
            <person name="Morio T."/>
            <person name="Rost R."/>
            <person name="Churcher C.M."/>
            <person name="Cooper J."/>
            <person name="Haydock S."/>
            <person name="van Driessche N."/>
            <person name="Cronin A."/>
            <person name="Goodhead I."/>
            <person name="Muzny D.M."/>
            <person name="Mourier T."/>
            <person name="Pain A."/>
            <person name="Lu M."/>
            <person name="Harper D."/>
            <person name="Lindsay R."/>
            <person name="Hauser H."/>
            <person name="James K.D."/>
            <person name="Quiles M."/>
            <person name="Madan Babu M."/>
            <person name="Saito T."/>
            <person name="Buchrieser C."/>
            <person name="Wardroper A."/>
            <person name="Felder M."/>
            <person name="Thangavelu M."/>
            <person name="Johnson D."/>
            <person name="Knights A."/>
            <person name="Loulseged H."/>
            <person name="Mungall K.L."/>
            <person name="Oliver K."/>
            <person name="Price C."/>
            <person name="Quail M.A."/>
            <person name="Urushihara H."/>
            <person name="Hernandez J."/>
            <person name="Rabbinowitsch E."/>
            <person name="Steffen D."/>
            <person name="Sanders M."/>
            <person name="Ma J."/>
            <person name="Kohara Y."/>
            <person name="Sharp S."/>
            <person name="Simmonds M.N."/>
            <person name="Spiegler S."/>
            <person name="Tivey A."/>
            <person name="Sugano S."/>
            <person name="White B."/>
            <person name="Walker D."/>
            <person name="Woodward J.R."/>
            <person name="Winckler T."/>
            <person name="Tanaka Y."/>
            <person name="Shaulsky G."/>
            <person name="Schleicher M."/>
            <person name="Weinstock G.M."/>
            <person name="Rosenthal A."/>
            <person name="Cox E.C."/>
            <person name="Chisholm R.L."/>
            <person name="Gibbs R.A."/>
            <person name="Loomis W.F."/>
            <person name="Platzer M."/>
            <person name="Kay R.R."/>
            <person name="Williams J.G."/>
            <person name="Dear P.H."/>
            <person name="Noegel A.A."/>
            <person name="Barrell B.G."/>
            <person name="Kuspa A."/>
        </authorList>
    </citation>
    <scope>NUCLEOTIDE SEQUENCE [LARGE SCALE GENOMIC DNA]</scope>
    <source>
        <strain>AX4</strain>
    </source>
</reference>
<reference key="2">
    <citation type="journal article" date="2006" name="Mol. Cell. Proteomics">
        <title>Proteomics fingerprinting of phagosome maturation and evidence for the role of a Galpha during uptake.</title>
        <authorList>
            <person name="Gotthardt D."/>
            <person name="Blancheteau V."/>
            <person name="Bosserhoff A."/>
            <person name="Ruppert T."/>
            <person name="Delorenzi M."/>
            <person name="Soldati T."/>
        </authorList>
    </citation>
    <scope>IDENTIFICATION BY MASS SPECTROMETRY [LARGE SCALE ANALYSIS]</scope>
    <source>
        <strain>AX2</strain>
    </source>
</reference>
<keyword id="KW-0378">Hydrolase</keyword>
<keyword id="KW-1185">Reference proteome</keyword>
<evidence type="ECO:0000250" key="1"/>
<evidence type="ECO:0000255" key="2"/>
<evidence type="ECO:0000305" key="3"/>
<proteinExistence type="evidence at protein level"/>
<sequence length="395" mass="45168">MFSSRDKAEVKLYFDSNNEENQKILDQCPHLYQKYDKDVTINDRINNIEDSEPTIKNGVTFYPPYYLYNSHFMNYYGSYKIPKLNLKTRREILVNPIDGGTISLDFFELGEFKEDTPTIVINHGLTGGSHERYVQYFAQRAYKEKGFRSVVFNYRGCAGNPITADRAYSAVQLDDIKFVTEYLTKTALPLVKKWFLVGFSLGSAILVNYMADAGKDSPYLAHVSISNPMNMVECTKNLSSTYINNLIYNKGLANNLKRLFRKFDGRLDKYATKEQIMAAQTIADFDDLITSKMFGFETAHDYYLAASSSKSIRNLVKPILFINAIDDPIAPTSGFPWKDFKSNPNTILCVSRWGGHLGFISYEDHMSWSDKAAVEYLSTFLDDNNNNNDNDNKTE</sequence>
<protein>
    <recommendedName>
        <fullName>Abhydrolase domain-containing protein</fullName>
        <ecNumber>3.1.1.-</ecNumber>
    </recommendedName>
</protein>